<keyword id="KW-0694">RNA-binding</keyword>
<keyword id="KW-0346">Stress response</keyword>
<reference key="1">
    <citation type="submission" date="2008-02" db="EMBL/GenBank/DDBJ databases">
        <title>Complete sequence of Escherichia coli C str. ATCC 8739.</title>
        <authorList>
            <person name="Copeland A."/>
            <person name="Lucas S."/>
            <person name="Lapidus A."/>
            <person name="Glavina del Rio T."/>
            <person name="Dalin E."/>
            <person name="Tice H."/>
            <person name="Bruce D."/>
            <person name="Goodwin L."/>
            <person name="Pitluck S."/>
            <person name="Kiss H."/>
            <person name="Brettin T."/>
            <person name="Detter J.C."/>
            <person name="Han C."/>
            <person name="Kuske C.R."/>
            <person name="Schmutz J."/>
            <person name="Larimer F."/>
            <person name="Land M."/>
            <person name="Hauser L."/>
            <person name="Kyrpides N."/>
            <person name="Mikhailova N."/>
            <person name="Ingram L."/>
            <person name="Richardson P."/>
        </authorList>
    </citation>
    <scope>NUCLEOTIDE SEQUENCE [LARGE SCALE GENOMIC DNA]</scope>
    <source>
        <strain>ATCC 8739 / DSM 1576 / NBRC 3972 / NCIMB 8545 / WDCM 00012 / Crooks</strain>
    </source>
</reference>
<comment type="function">
    <text evidence="1">RNA chaperone that binds small regulatory RNA (sRNAs) and mRNAs to facilitate mRNA translational regulation in response to envelope stress, environmental stress and changes in metabolite concentrations. Also binds with high specificity to tRNAs.</text>
</comment>
<comment type="subunit">
    <text evidence="1">Homohexamer.</text>
</comment>
<comment type="similarity">
    <text evidence="1">Belongs to the Hfq family.</text>
</comment>
<protein>
    <recommendedName>
        <fullName evidence="1">RNA-binding protein Hfq</fullName>
    </recommendedName>
</protein>
<dbReference type="EMBL" id="CP000946">
    <property type="protein sequence ID" value="ACA79445.1"/>
    <property type="molecule type" value="Genomic_DNA"/>
</dbReference>
<dbReference type="RefSeq" id="WP_001051883.1">
    <property type="nucleotide sequence ID" value="NZ_MTFT01000012.1"/>
</dbReference>
<dbReference type="SMR" id="B1IT34"/>
<dbReference type="GeneID" id="93777649"/>
<dbReference type="KEGG" id="ecl:EcolC_3841"/>
<dbReference type="HOGENOM" id="CLU_113688_2_1_6"/>
<dbReference type="GO" id="GO:0005829">
    <property type="term" value="C:cytosol"/>
    <property type="evidence" value="ECO:0007669"/>
    <property type="project" value="TreeGrafter"/>
</dbReference>
<dbReference type="GO" id="GO:0003723">
    <property type="term" value="F:RNA binding"/>
    <property type="evidence" value="ECO:0007669"/>
    <property type="project" value="UniProtKB-UniRule"/>
</dbReference>
<dbReference type="GO" id="GO:0006355">
    <property type="term" value="P:regulation of DNA-templated transcription"/>
    <property type="evidence" value="ECO:0007669"/>
    <property type="project" value="InterPro"/>
</dbReference>
<dbReference type="GO" id="GO:0043487">
    <property type="term" value="P:regulation of RNA stability"/>
    <property type="evidence" value="ECO:0007669"/>
    <property type="project" value="TreeGrafter"/>
</dbReference>
<dbReference type="GO" id="GO:0045974">
    <property type="term" value="P:regulation of translation, ncRNA-mediated"/>
    <property type="evidence" value="ECO:0007669"/>
    <property type="project" value="TreeGrafter"/>
</dbReference>
<dbReference type="CDD" id="cd01716">
    <property type="entry name" value="Hfq"/>
    <property type="match status" value="1"/>
</dbReference>
<dbReference type="FunFam" id="2.30.30.100:FF:000001">
    <property type="entry name" value="RNA-binding protein Hfq"/>
    <property type="match status" value="1"/>
</dbReference>
<dbReference type="Gene3D" id="2.30.30.100">
    <property type="match status" value="1"/>
</dbReference>
<dbReference type="HAMAP" id="MF_00436">
    <property type="entry name" value="Hfq"/>
    <property type="match status" value="1"/>
</dbReference>
<dbReference type="InterPro" id="IPR005001">
    <property type="entry name" value="Hfq"/>
</dbReference>
<dbReference type="InterPro" id="IPR010920">
    <property type="entry name" value="LSM_dom_sf"/>
</dbReference>
<dbReference type="InterPro" id="IPR047575">
    <property type="entry name" value="Sm"/>
</dbReference>
<dbReference type="NCBIfam" id="TIGR02383">
    <property type="entry name" value="Hfq"/>
    <property type="match status" value="1"/>
</dbReference>
<dbReference type="NCBIfam" id="NF001602">
    <property type="entry name" value="PRK00395.1"/>
    <property type="match status" value="1"/>
</dbReference>
<dbReference type="PANTHER" id="PTHR34772">
    <property type="entry name" value="RNA-BINDING PROTEIN HFQ"/>
    <property type="match status" value="1"/>
</dbReference>
<dbReference type="PANTHER" id="PTHR34772:SF1">
    <property type="entry name" value="RNA-BINDING PROTEIN HFQ"/>
    <property type="match status" value="1"/>
</dbReference>
<dbReference type="Pfam" id="PF17209">
    <property type="entry name" value="Hfq"/>
    <property type="match status" value="1"/>
</dbReference>
<dbReference type="SUPFAM" id="SSF50182">
    <property type="entry name" value="Sm-like ribonucleoproteins"/>
    <property type="match status" value="1"/>
</dbReference>
<dbReference type="PROSITE" id="PS52002">
    <property type="entry name" value="SM"/>
    <property type="match status" value="1"/>
</dbReference>
<feature type="chain" id="PRO_1000080663" description="RNA-binding protein Hfq">
    <location>
        <begin position="1"/>
        <end position="102"/>
    </location>
</feature>
<feature type="domain" description="Sm" evidence="2">
    <location>
        <begin position="9"/>
        <end position="68"/>
    </location>
</feature>
<feature type="region of interest" description="Disordered" evidence="3">
    <location>
        <begin position="63"/>
        <end position="102"/>
    </location>
</feature>
<feature type="compositionally biased region" description="Polar residues" evidence="3">
    <location>
        <begin position="70"/>
        <end position="96"/>
    </location>
</feature>
<sequence length="102" mass="11166">MAKGQSLQDPFLNALRRERVPVSIYLVNGIKLQGQIESFDQFVILLKNTVSQMVYKHAISTVVPSRPVSHHSNNAGGGTSSNYHHGSSAQNTSAQQDSEETE</sequence>
<proteinExistence type="inferred from homology"/>
<organism>
    <name type="scientific">Escherichia coli (strain ATCC 8739 / DSM 1576 / NBRC 3972 / NCIMB 8545 / WDCM 00012 / Crooks)</name>
    <dbReference type="NCBI Taxonomy" id="481805"/>
    <lineage>
        <taxon>Bacteria</taxon>
        <taxon>Pseudomonadati</taxon>
        <taxon>Pseudomonadota</taxon>
        <taxon>Gammaproteobacteria</taxon>
        <taxon>Enterobacterales</taxon>
        <taxon>Enterobacteriaceae</taxon>
        <taxon>Escherichia</taxon>
    </lineage>
</organism>
<gene>
    <name evidence="1" type="primary">hfq</name>
    <name type="ordered locus">EcolC_3841</name>
</gene>
<evidence type="ECO:0000255" key="1">
    <source>
        <dbReference type="HAMAP-Rule" id="MF_00436"/>
    </source>
</evidence>
<evidence type="ECO:0000255" key="2">
    <source>
        <dbReference type="PROSITE-ProRule" id="PRU01346"/>
    </source>
</evidence>
<evidence type="ECO:0000256" key="3">
    <source>
        <dbReference type="SAM" id="MobiDB-lite"/>
    </source>
</evidence>
<accession>B1IT34</accession>
<name>HFQ_ECOLC</name>